<sequence>MFIISQYREHRSLSILTQTCTIFRSMQVSSKHENLSVSFHLTPLQVLIITGTSSGIGLAAATMALEEGAKVLGVDISKPPDSLARHANYQFFQADLSHPEAPARVVEACSRTYGDRIDGLLNIAGVMDLNQSADSLSDNVWERCISINLTAPVKLMREVIPIMKLRGKGSIVNVASKAALSGAVSGVAYTASEHPWP</sequence>
<name>AUSX_EMENI</name>
<protein>
    <recommendedName>
        <fullName evidence="8">Short chain dehydrogenase ausX</fullName>
        <ecNumber evidence="10">1.1.1.-</ecNumber>
    </recommendedName>
    <alternativeName>
        <fullName evidence="8">Austinoid biosynthesis cluster protein X</fullName>
    </alternativeName>
</protein>
<evidence type="ECO:0000250" key="1">
    <source>
        <dbReference type="UniProtKB" id="L0E2Z4"/>
    </source>
</evidence>
<evidence type="ECO:0000250" key="2">
    <source>
        <dbReference type="UniProtKB" id="O93868"/>
    </source>
</evidence>
<evidence type="ECO:0000255" key="3">
    <source>
        <dbReference type="PROSITE-ProRule" id="PRU10001"/>
    </source>
</evidence>
<evidence type="ECO:0000269" key="4">
    <source>
    </source>
</evidence>
<evidence type="ECO:0000269" key="5">
    <source>
    </source>
</evidence>
<evidence type="ECO:0000269" key="6">
    <source>
    </source>
</evidence>
<evidence type="ECO:0000269" key="7">
    <source>
    </source>
</evidence>
<evidence type="ECO:0000303" key="8">
    <source>
    </source>
</evidence>
<evidence type="ECO:0000305" key="9"/>
<evidence type="ECO:0000305" key="10">
    <source>
    </source>
</evidence>
<feature type="chain" id="PRO_0000453872" description="Short chain dehydrogenase ausX">
    <location>
        <begin position="1"/>
        <end position="197"/>
    </location>
</feature>
<feature type="active site" description="Proton acceptor" evidence="3">
    <location>
        <position position="189"/>
    </location>
</feature>
<feature type="active site" description="Proton donor" evidence="2">
    <location>
        <position position="189"/>
    </location>
</feature>
<feature type="binding site" evidence="1">
    <location>
        <position position="49"/>
    </location>
    <ligand>
        <name>NADP(+)</name>
        <dbReference type="ChEBI" id="CHEBI:58349"/>
    </ligand>
</feature>
<feature type="binding site" evidence="1">
    <location>
        <position position="95"/>
    </location>
    <ligand>
        <name>NADP(+)</name>
        <dbReference type="ChEBI" id="CHEBI:58349"/>
    </ligand>
</feature>
<feature type="binding site" evidence="1">
    <location>
        <position position="157"/>
    </location>
    <ligand>
        <name>NADP(+)</name>
        <dbReference type="ChEBI" id="CHEBI:58349"/>
    </ligand>
</feature>
<feature type="binding site" evidence="2">
    <location>
        <position position="189"/>
    </location>
    <ligand>
        <name>NADP(+)</name>
        <dbReference type="ChEBI" id="CHEBI:58349"/>
    </ligand>
</feature>
<reference key="1">
    <citation type="journal article" date="2005" name="Nature">
        <title>Sequencing of Aspergillus nidulans and comparative analysis with A. fumigatus and A. oryzae.</title>
        <authorList>
            <person name="Galagan J.E."/>
            <person name="Calvo S.E."/>
            <person name="Cuomo C."/>
            <person name="Ma L.-J."/>
            <person name="Wortman J.R."/>
            <person name="Batzoglou S."/>
            <person name="Lee S.-I."/>
            <person name="Bastuerkmen M."/>
            <person name="Spevak C.C."/>
            <person name="Clutterbuck J."/>
            <person name="Kapitonov V."/>
            <person name="Jurka J."/>
            <person name="Scazzocchio C."/>
            <person name="Farman M.L."/>
            <person name="Butler J."/>
            <person name="Purcell S."/>
            <person name="Harris S."/>
            <person name="Braus G.H."/>
            <person name="Draht O."/>
            <person name="Busch S."/>
            <person name="D'Enfert C."/>
            <person name="Bouchier C."/>
            <person name="Goldman G.H."/>
            <person name="Bell-Pedersen D."/>
            <person name="Griffiths-Jones S."/>
            <person name="Doonan J.H."/>
            <person name="Yu J."/>
            <person name="Vienken K."/>
            <person name="Pain A."/>
            <person name="Freitag M."/>
            <person name="Selker E.U."/>
            <person name="Archer D.B."/>
            <person name="Penalva M.A."/>
            <person name="Oakley B.R."/>
            <person name="Momany M."/>
            <person name="Tanaka T."/>
            <person name="Kumagai T."/>
            <person name="Asai K."/>
            <person name="Machida M."/>
            <person name="Nierman W.C."/>
            <person name="Denning D.W."/>
            <person name="Caddick M.X."/>
            <person name="Hynes M."/>
            <person name="Paoletti M."/>
            <person name="Fischer R."/>
            <person name="Miller B.L."/>
            <person name="Dyer P.S."/>
            <person name="Sachs M.S."/>
            <person name="Osmani S.A."/>
            <person name="Birren B.W."/>
        </authorList>
    </citation>
    <scope>NUCLEOTIDE SEQUENCE [LARGE SCALE GENOMIC DNA]</scope>
    <source>
        <strain>FGSC A4 / ATCC 38163 / CBS 112.46 / NRRL 194 / M139</strain>
    </source>
</reference>
<reference key="2">
    <citation type="journal article" date="2009" name="Fungal Genet. Biol.">
        <title>The 2008 update of the Aspergillus nidulans genome annotation: a community effort.</title>
        <authorList>
            <person name="Wortman J.R."/>
            <person name="Gilsenan J.M."/>
            <person name="Joardar V."/>
            <person name="Deegan J."/>
            <person name="Clutterbuck J."/>
            <person name="Andersen M.R."/>
            <person name="Archer D."/>
            <person name="Bencina M."/>
            <person name="Braus G."/>
            <person name="Coutinho P."/>
            <person name="von Dohren H."/>
            <person name="Doonan J."/>
            <person name="Driessen A.J."/>
            <person name="Durek P."/>
            <person name="Espeso E."/>
            <person name="Fekete E."/>
            <person name="Flipphi M."/>
            <person name="Estrada C.G."/>
            <person name="Geysens S."/>
            <person name="Goldman G."/>
            <person name="de Groot P.W."/>
            <person name="Hansen K."/>
            <person name="Harris S.D."/>
            <person name="Heinekamp T."/>
            <person name="Helmstaedt K."/>
            <person name="Henrissat B."/>
            <person name="Hofmann G."/>
            <person name="Homan T."/>
            <person name="Horio T."/>
            <person name="Horiuchi H."/>
            <person name="James S."/>
            <person name="Jones M."/>
            <person name="Karaffa L."/>
            <person name="Karanyi Z."/>
            <person name="Kato M."/>
            <person name="Keller N."/>
            <person name="Kelly D.E."/>
            <person name="Kiel J.A."/>
            <person name="Kim J.M."/>
            <person name="van der Klei I.J."/>
            <person name="Klis F.M."/>
            <person name="Kovalchuk A."/>
            <person name="Krasevec N."/>
            <person name="Kubicek C.P."/>
            <person name="Liu B."/>
            <person name="Maccabe A."/>
            <person name="Meyer V."/>
            <person name="Mirabito P."/>
            <person name="Miskei M."/>
            <person name="Mos M."/>
            <person name="Mullins J."/>
            <person name="Nelson D.R."/>
            <person name="Nielsen J."/>
            <person name="Oakley B.R."/>
            <person name="Osmani S.A."/>
            <person name="Pakula T."/>
            <person name="Paszewski A."/>
            <person name="Paulsen I."/>
            <person name="Pilsyk S."/>
            <person name="Pocsi I."/>
            <person name="Punt P.J."/>
            <person name="Ram A.F."/>
            <person name="Ren Q."/>
            <person name="Robellet X."/>
            <person name="Robson G."/>
            <person name="Seiboth B."/>
            <person name="van Solingen P."/>
            <person name="Specht T."/>
            <person name="Sun J."/>
            <person name="Taheri-Talesh N."/>
            <person name="Takeshita N."/>
            <person name="Ussery D."/>
            <person name="vanKuyk P.A."/>
            <person name="Visser H."/>
            <person name="van de Vondervoort P.J."/>
            <person name="de Vries R.P."/>
            <person name="Walton J."/>
            <person name="Xiang X."/>
            <person name="Xiong Y."/>
            <person name="Zeng A.P."/>
            <person name="Brandt B.W."/>
            <person name="Cornell M.J."/>
            <person name="van den Hondel C.A."/>
            <person name="Visser J."/>
            <person name="Oliver S.G."/>
            <person name="Turner G."/>
        </authorList>
    </citation>
    <scope>GENOME REANNOTATION</scope>
    <source>
        <strain>FGSC A4 / ATCC 38163 / CBS 112.46 / NRRL 194 / M139</strain>
    </source>
</reference>
<reference key="3">
    <citation type="journal article" date="2012" name="ACS Chem. Biol.">
        <title>Signaling the induction of sporulation involves the interaction of two secondary metabolites in Aspergillus nidulans.</title>
        <authorList>
            <person name="Rodriguez-Urra A.B."/>
            <person name="Jimenez C."/>
            <person name="Nieto M.I."/>
            <person name="Rodriguez J."/>
            <person name="Hayashi H."/>
            <person name="Ugalde U."/>
        </authorList>
    </citation>
    <scope>FUNCTION</scope>
</reference>
<reference key="4">
    <citation type="journal article" date="2012" name="J. Am. Chem. Soc.">
        <title>Two separate gene clusters encode the biosynthetic pathway for the meroterpenoids austinol and dehydroaustinol in Aspergillus nidulans.</title>
        <authorList>
            <person name="Lo H.C."/>
            <person name="Entwistle R."/>
            <person name="Guo C.J."/>
            <person name="Ahuja M."/>
            <person name="Szewczyk E."/>
            <person name="Hung J.H."/>
            <person name="Chiang Y.M."/>
            <person name="Oakley B.R."/>
            <person name="Wang C.C."/>
        </authorList>
    </citation>
    <scope>FUNCTION</scope>
</reference>
<reference key="5">
    <citation type="journal article" date="2013" name="J. Am. Chem. Soc.">
        <title>Spiro-ring formation is catalyzed by a multifunctional dioxygenase in austinol biosynthesis.</title>
        <authorList>
            <person name="Matsuda Y."/>
            <person name="Awakawa T."/>
            <person name="Wakimoto T."/>
            <person name="Abe I."/>
        </authorList>
    </citation>
    <scope>FUNCTION</scope>
</reference>
<reference key="6">
    <citation type="journal article" date="2017" name="ACS Chem. Biol.">
        <title>Rewiring of the austinoid biosynthetic pathway in filamentous fungi.</title>
        <authorList>
            <person name="Mattern D.J."/>
            <person name="Valiante V."/>
            <person name="Horn F."/>
            <person name="Petzke L."/>
            <person name="Brakhage A.A."/>
        </authorList>
    </citation>
    <scope>FUNCTION</scope>
</reference>
<proteinExistence type="inferred from homology"/>
<accession>P9WEP2</accession>
<comment type="function">
    <text evidence="4 5 6 7">Short chain dehydrogenase; part of the gene cluster A that mediates the biosynthesis of austinol and dehydroaustinol, two fungal meroterpenoids (PubMed:22329759). The first step of the pathway is the synthesis of 3,5-dimethylorsellinic acid by the polyketide synthase ausA (PubMed:22329759). 3,5-dimethylorsellinic acid is then prenylated by the polyprenyl transferase ausN (PubMed:22329759). Further epoxidation by the FAD-dependent monooxygenase ausM and cyclization by the probable terpene cyclase ausL lead to the formation of protoaustinoid A (PubMed:22329759). Protoaustinoid A is then oxidized to spiro-lactone preaustinoid A3 by the combined action of the FAD-binding monooxygenases ausB and ausC, and the dioxygenase ausE (PubMed:22329759, PubMed:23865690). Acid-catalyzed keto-rearrangement and ring contraction of the tetraketide portion of preaustinoid A3 by ausJ lead to the formation of preaustinoid A4 (PubMed:22329759). The aldo-keto reductase ausK, with the help of ausH, is involved in the next step by transforming preaustinoid A4 into isoaustinone which is in turn hydroxylated by the P450 monooxygenase ausI to form austinolide (PubMed:22329759). Finally, the cytochrome P450 monooxygenase ausG modifies austinolide to austinol (PubMed:22329759). Austinol can be further modified to dehydroaustinol which forms a diffusible complex with diorcinol that initiates conidiation (PubMed:22234162, PubMed:22329759). Due to genetic rearrangements of the clusters and the subsequent loss of some enzymes, the end products of the Emericella nidulans austinoid biosynthesis clusters are austinol and dehydroaustinol, even if additional enzymes, such as the O-acetyltransferase ausQ and the cytochrome P450 monooxygenase ausR are still functional (PubMed:29076725).</text>
</comment>
<comment type="pathway">
    <text evidence="10">Secondary metabolite biosynthesis; terpenoid biosynthesis.</text>
</comment>
<comment type="miscellaneous">
    <text evidence="10">In A.calidoustus, the austinoid gene cluster lies on a contiguous DNA region, while clusters from E.nidulans and P.brasilianum are split in their respective genomes. Genetic rearrangements provoked variability among the clusters and E.nidulans produces the least number of austionoid derivatives with the end products austinol and dehydroaustinol, while P.brasilianum can produce until acetoxydehydroaustin, and A.calidoustus produces the highest number of identified derivatives.</text>
</comment>
<comment type="similarity">
    <text evidence="9">Belongs to the short-chain dehydrogenases/reductases (SDR) family.</text>
</comment>
<gene>
    <name evidence="8" type="primary">ausX</name>
    <name type="ORF">AN12376</name>
</gene>
<dbReference type="EC" id="1.1.1.-" evidence="10"/>
<dbReference type="EMBL" id="BN001305">
    <property type="status" value="NOT_ANNOTATED_CDS"/>
    <property type="molecule type" value="Genomic_DNA"/>
</dbReference>
<dbReference type="EMBL" id="AACD01000152">
    <property type="status" value="NOT_ANNOTATED_CDS"/>
    <property type="molecule type" value="Genomic_DNA"/>
</dbReference>
<dbReference type="SMR" id="P9WEP2"/>
<dbReference type="InParanoid" id="P9WEP2"/>
<dbReference type="UniPathway" id="UPA00213"/>
<dbReference type="Proteomes" id="UP000000560">
    <property type="component" value="Chromosome V"/>
</dbReference>
<dbReference type="GO" id="GO:0016491">
    <property type="term" value="F:oxidoreductase activity"/>
    <property type="evidence" value="ECO:0007669"/>
    <property type="project" value="UniProtKB-KW"/>
</dbReference>
<dbReference type="GO" id="GO:0016114">
    <property type="term" value="P:terpenoid biosynthetic process"/>
    <property type="evidence" value="ECO:0007669"/>
    <property type="project" value="UniProtKB-UniPathway"/>
</dbReference>
<dbReference type="CDD" id="cd05233">
    <property type="entry name" value="SDR_c"/>
    <property type="match status" value="1"/>
</dbReference>
<dbReference type="Gene3D" id="3.40.50.720">
    <property type="entry name" value="NAD(P)-binding Rossmann-like Domain"/>
    <property type="match status" value="1"/>
</dbReference>
<dbReference type="InterPro" id="IPR036291">
    <property type="entry name" value="NAD(P)-bd_dom_sf"/>
</dbReference>
<dbReference type="InterPro" id="IPR002347">
    <property type="entry name" value="SDR_fam"/>
</dbReference>
<dbReference type="PANTHER" id="PTHR42760:SF133">
    <property type="entry name" value="3-OXOACYL-[ACYL-CARRIER-PROTEIN] REDUCTASE"/>
    <property type="match status" value="1"/>
</dbReference>
<dbReference type="PANTHER" id="PTHR42760">
    <property type="entry name" value="SHORT-CHAIN DEHYDROGENASES/REDUCTASES FAMILY MEMBER"/>
    <property type="match status" value="1"/>
</dbReference>
<dbReference type="Pfam" id="PF00106">
    <property type="entry name" value="adh_short"/>
    <property type="match status" value="1"/>
</dbReference>
<dbReference type="PRINTS" id="PR00081">
    <property type="entry name" value="GDHRDH"/>
</dbReference>
<dbReference type="SUPFAM" id="SSF51735">
    <property type="entry name" value="NAD(P)-binding Rossmann-fold domains"/>
    <property type="match status" value="1"/>
</dbReference>
<keyword id="KW-0521">NADP</keyword>
<keyword id="KW-0560">Oxidoreductase</keyword>
<keyword id="KW-1185">Reference proteome</keyword>
<organism>
    <name type="scientific">Emericella nidulans (strain FGSC A4 / ATCC 38163 / CBS 112.46 / NRRL 194 / M139)</name>
    <name type="common">Aspergillus nidulans</name>
    <dbReference type="NCBI Taxonomy" id="227321"/>
    <lineage>
        <taxon>Eukaryota</taxon>
        <taxon>Fungi</taxon>
        <taxon>Dikarya</taxon>
        <taxon>Ascomycota</taxon>
        <taxon>Pezizomycotina</taxon>
        <taxon>Eurotiomycetes</taxon>
        <taxon>Eurotiomycetidae</taxon>
        <taxon>Eurotiales</taxon>
        <taxon>Aspergillaceae</taxon>
        <taxon>Aspergillus</taxon>
        <taxon>Aspergillus subgen. Nidulantes</taxon>
    </lineage>
</organism>